<keyword id="KW-0002">3D-structure</keyword>
<keyword id="KW-0963">Cytoplasm</keyword>
<keyword id="KW-0378">Hydrolase</keyword>
<keyword id="KW-0645">Protease</keyword>
<keyword id="KW-1185">Reference proteome</keyword>
<keyword id="KW-0720">Serine protease</keyword>
<accession>P9WPC3</accession>
<accession>L0TCE9</accession>
<accession>O53187</accession>
<accession>P63783</accession>
<dbReference type="EC" id="3.4.21.92" evidence="1"/>
<dbReference type="EMBL" id="AL123456">
    <property type="protein sequence ID" value="CCP45253.1"/>
    <property type="molecule type" value="Genomic_DNA"/>
</dbReference>
<dbReference type="PIR" id="C70865">
    <property type="entry name" value="C70865"/>
</dbReference>
<dbReference type="RefSeq" id="NP_216976.1">
    <property type="nucleotide sequence ID" value="NC_000962.3"/>
</dbReference>
<dbReference type="RefSeq" id="WP_003412648.1">
    <property type="nucleotide sequence ID" value="NZ_NVQJ01000024.1"/>
</dbReference>
<dbReference type="PDB" id="4U0G">
    <property type="method" value="X-ray"/>
    <property type="resolution" value="3.20 A"/>
    <property type="chains" value="A/B/C/D/E/F/G/O/P/Q/R/S/T/U=13-214"/>
</dbReference>
<dbReference type="PDB" id="5DZK">
    <property type="method" value="X-ray"/>
    <property type="resolution" value="3.07 A"/>
    <property type="chains" value="A/B/C/D/E/F/G/a/b/c/d/e/f/g=1-214"/>
</dbReference>
<dbReference type="PDB" id="5E0S">
    <property type="method" value="X-ray"/>
    <property type="resolution" value="2.90 A"/>
    <property type="chains" value="A/B/C/D/E/F/G/a/b/c/d/e/f/g=1-214"/>
</dbReference>
<dbReference type="PDB" id="6IW7">
    <property type="method" value="X-ray"/>
    <property type="resolution" value="2.69 A"/>
    <property type="chains" value="A/C/E/F/H/J/L=13-214"/>
</dbReference>
<dbReference type="PDB" id="6VGK">
    <property type="method" value="EM"/>
    <property type="resolution" value="3.10 A"/>
    <property type="chains" value="A/B/C/D/E/F/G=16-214"/>
</dbReference>
<dbReference type="PDB" id="6VGN">
    <property type="method" value="EM"/>
    <property type="resolution" value="3.10 A"/>
    <property type="chains" value="A/B/C/D/E/F/G=15-214"/>
</dbReference>
<dbReference type="PDB" id="6VGQ">
    <property type="method" value="EM"/>
    <property type="resolution" value="3.50 A"/>
    <property type="chains" value="A/B/C/D/E/F/G=15-214"/>
</dbReference>
<dbReference type="PDB" id="7X8X">
    <property type="method" value="X-ray"/>
    <property type="resolution" value="3.24 A"/>
    <property type="chains" value="A/C/E/F/H/J/L/O/Q/S/T/V/X/a=14-210"/>
</dbReference>
<dbReference type="PDB" id="8YD4">
    <property type="method" value="EM"/>
    <property type="resolution" value="3.69 A"/>
    <property type="chains" value="H/I/J/K/L/M/N=1-214"/>
</dbReference>
<dbReference type="PDBsum" id="4U0G"/>
<dbReference type="PDBsum" id="5DZK"/>
<dbReference type="PDBsum" id="5E0S"/>
<dbReference type="PDBsum" id="6IW7"/>
<dbReference type="PDBsum" id="6VGK"/>
<dbReference type="PDBsum" id="6VGN"/>
<dbReference type="PDBsum" id="6VGQ"/>
<dbReference type="PDBsum" id="7X8X"/>
<dbReference type="PDBsum" id="8YD4"/>
<dbReference type="EMDB" id="EMD-21197"/>
<dbReference type="EMDB" id="EMD-21198"/>
<dbReference type="EMDB" id="EMD-39164"/>
<dbReference type="SMR" id="P9WPC3"/>
<dbReference type="FunCoup" id="P9WPC3">
    <property type="interactions" value="200"/>
</dbReference>
<dbReference type="IntAct" id="P9WPC3">
    <property type="interactions" value="1"/>
</dbReference>
<dbReference type="STRING" id="83332.Rv2460c"/>
<dbReference type="BindingDB" id="P9WPC3"/>
<dbReference type="ChEMBL" id="CHEMBL4662931"/>
<dbReference type="PaxDb" id="83332-Rv2460c"/>
<dbReference type="DNASU" id="888174"/>
<dbReference type="GeneID" id="888174"/>
<dbReference type="KEGG" id="mtu:Rv2460c"/>
<dbReference type="KEGG" id="mtv:RVBD_2460c"/>
<dbReference type="TubercuList" id="Rv2460c"/>
<dbReference type="eggNOG" id="COG0740">
    <property type="taxonomic scope" value="Bacteria"/>
</dbReference>
<dbReference type="InParanoid" id="P9WPC3"/>
<dbReference type="OrthoDB" id="9802800at2"/>
<dbReference type="PhylomeDB" id="P9WPC3"/>
<dbReference type="BRENDA" id="3.4.21.92">
    <property type="organism ID" value="3445"/>
</dbReference>
<dbReference type="EvolutionaryTrace" id="P9WPC3"/>
<dbReference type="Proteomes" id="UP000001584">
    <property type="component" value="Chromosome"/>
</dbReference>
<dbReference type="GO" id="GO:0005829">
    <property type="term" value="C:cytosol"/>
    <property type="evidence" value="ECO:0007005"/>
    <property type="project" value="MTBBASE"/>
</dbReference>
<dbReference type="GO" id="GO:0009368">
    <property type="term" value="C:endopeptidase Clp complex"/>
    <property type="evidence" value="ECO:0000318"/>
    <property type="project" value="GO_Central"/>
</dbReference>
<dbReference type="GO" id="GO:0009274">
    <property type="term" value="C:peptidoglycan-based cell wall"/>
    <property type="evidence" value="ECO:0007005"/>
    <property type="project" value="MTBBASE"/>
</dbReference>
<dbReference type="GO" id="GO:0005886">
    <property type="term" value="C:plasma membrane"/>
    <property type="evidence" value="ECO:0007005"/>
    <property type="project" value="MTBBASE"/>
</dbReference>
<dbReference type="GO" id="GO:0004176">
    <property type="term" value="F:ATP-dependent peptidase activity"/>
    <property type="evidence" value="ECO:0000318"/>
    <property type="project" value="GO_Central"/>
</dbReference>
<dbReference type="GO" id="GO:0051117">
    <property type="term" value="F:ATPase binding"/>
    <property type="evidence" value="ECO:0000318"/>
    <property type="project" value="GO_Central"/>
</dbReference>
<dbReference type="GO" id="GO:0004252">
    <property type="term" value="F:serine-type endopeptidase activity"/>
    <property type="evidence" value="ECO:0000318"/>
    <property type="project" value="GO_Central"/>
</dbReference>
<dbReference type="GO" id="GO:0006515">
    <property type="term" value="P:protein quality control for misfolded or incompletely synthesized proteins"/>
    <property type="evidence" value="ECO:0000318"/>
    <property type="project" value="GO_Central"/>
</dbReference>
<dbReference type="CDD" id="cd07017">
    <property type="entry name" value="S14_ClpP_2"/>
    <property type="match status" value="1"/>
</dbReference>
<dbReference type="FunFam" id="3.90.226.10:FF:000002">
    <property type="entry name" value="ATP-dependent Clp protease proteolytic subunit"/>
    <property type="match status" value="1"/>
</dbReference>
<dbReference type="Gene3D" id="3.90.226.10">
    <property type="entry name" value="2-enoyl-CoA Hydratase, Chain A, domain 1"/>
    <property type="match status" value="1"/>
</dbReference>
<dbReference type="HAMAP" id="MF_00444">
    <property type="entry name" value="ClpP"/>
    <property type="match status" value="1"/>
</dbReference>
<dbReference type="InterPro" id="IPR001907">
    <property type="entry name" value="ClpP"/>
</dbReference>
<dbReference type="InterPro" id="IPR029045">
    <property type="entry name" value="ClpP/crotonase-like_dom_sf"/>
</dbReference>
<dbReference type="InterPro" id="IPR023562">
    <property type="entry name" value="ClpP/TepA"/>
</dbReference>
<dbReference type="InterPro" id="IPR033135">
    <property type="entry name" value="ClpP_His_AS"/>
</dbReference>
<dbReference type="InterPro" id="IPR018215">
    <property type="entry name" value="ClpP_Ser_AS"/>
</dbReference>
<dbReference type="NCBIfam" id="NF001368">
    <property type="entry name" value="PRK00277.1"/>
    <property type="match status" value="1"/>
</dbReference>
<dbReference type="NCBIfam" id="NF009205">
    <property type="entry name" value="PRK12553.1"/>
    <property type="match status" value="1"/>
</dbReference>
<dbReference type="PANTHER" id="PTHR10381">
    <property type="entry name" value="ATP-DEPENDENT CLP PROTEASE PROTEOLYTIC SUBUNIT"/>
    <property type="match status" value="1"/>
</dbReference>
<dbReference type="PANTHER" id="PTHR10381:SF26">
    <property type="entry name" value="ATP-DEPENDENT CLP PROTEASE PROTEOLYTIC SUBUNIT-LIKE-RELATED"/>
    <property type="match status" value="1"/>
</dbReference>
<dbReference type="Pfam" id="PF00574">
    <property type="entry name" value="CLP_protease"/>
    <property type="match status" value="1"/>
</dbReference>
<dbReference type="PRINTS" id="PR00127">
    <property type="entry name" value="CLPPROTEASEP"/>
</dbReference>
<dbReference type="SUPFAM" id="SSF52096">
    <property type="entry name" value="ClpP/crotonase"/>
    <property type="match status" value="1"/>
</dbReference>
<dbReference type="PROSITE" id="PS00382">
    <property type="entry name" value="CLP_PROTEASE_HIS"/>
    <property type="match status" value="1"/>
</dbReference>
<dbReference type="PROSITE" id="PS00381">
    <property type="entry name" value="CLP_PROTEASE_SER"/>
    <property type="match status" value="1"/>
</dbReference>
<protein>
    <recommendedName>
        <fullName evidence="1">ATP-dependent Clp protease proteolytic subunit 2</fullName>
        <ecNumber evidence="1">3.4.21.92</ecNumber>
    </recommendedName>
    <alternativeName>
        <fullName evidence="1">Endopeptidase Clp 2</fullName>
    </alternativeName>
</protein>
<evidence type="ECO:0000255" key="1">
    <source>
        <dbReference type="HAMAP-Rule" id="MF_00444"/>
    </source>
</evidence>
<evidence type="ECO:0000269" key="2">
    <source>
    </source>
</evidence>
<evidence type="ECO:0000269" key="3">
    <source>
    </source>
</evidence>
<evidence type="ECO:0007829" key="4">
    <source>
        <dbReference type="PDB" id="5DZK"/>
    </source>
</evidence>
<evidence type="ECO:0007829" key="5">
    <source>
        <dbReference type="PDB" id="6IW7"/>
    </source>
</evidence>
<evidence type="ECO:0007829" key="6">
    <source>
        <dbReference type="PDB" id="6VGK"/>
    </source>
</evidence>
<name>CLPP2_MYCTU</name>
<gene>
    <name evidence="1" type="primary">clpP2</name>
    <name type="ordered locus">Rv2460c</name>
    <name type="ORF">MTV008.16c</name>
</gene>
<comment type="function">
    <text evidence="1 2 3">Cleaves peptides in various proteins in a process that requires ATP hydrolysis. Has a chymotrypsin-like activity. Plays a major role in the degradation of misfolded proteins (By similarity). Degrades anti-sigma-D factor RsdA when present in a complex with ClpP1 and ClpX. Degrades anti-sigma-E factor RseA in the presence of ClpC1. Does not seem to act on anti-sigma-L factor RslA.</text>
</comment>
<comment type="catalytic activity">
    <reaction evidence="1">
        <text>Hydrolysis of proteins to small peptides in the presence of ATP and magnesium. alpha-casein is the usual test substrate. In the absence of ATP, only oligopeptides shorter than five residues are hydrolyzed (such as succinyl-Leu-Tyr-|-NHMec, and Leu-Tyr-Leu-|-Tyr-Trp, in which cleavage of the -Tyr-|-Leu- and -Tyr-|-Trp bonds also occurs).</text>
        <dbReference type="EC" id="3.4.21.92"/>
    </reaction>
</comment>
<comment type="subunit">
    <text evidence="1">Fourteen ClpP subunits assemble into 2 heptameric rings which stack back to back to give a disk-like structure with a central cavity, resembling the structure of eukaryotic proteasomes (By similarity). Forms a complex with ClpP1 and ClpX.</text>
</comment>
<comment type="subcellular location">
    <subcellularLocation>
        <location evidence="1">Cytoplasm</location>
    </subcellularLocation>
</comment>
<comment type="similarity">
    <text evidence="1">Belongs to the peptidase S14 family.</text>
</comment>
<feature type="chain" id="PRO_0000179597" description="ATP-dependent Clp protease proteolytic subunit 2">
    <location>
        <begin position="1"/>
        <end position="214"/>
    </location>
</feature>
<feature type="active site" description="Nucleophile" evidence="1">
    <location>
        <position position="110"/>
    </location>
</feature>
<feature type="active site" evidence="1">
    <location>
        <position position="135"/>
    </location>
</feature>
<feature type="strand" evidence="5">
    <location>
        <begin position="19"/>
        <end position="23"/>
    </location>
</feature>
<feature type="strand" evidence="5">
    <location>
        <begin position="26"/>
        <end position="30"/>
    </location>
</feature>
<feature type="helix" evidence="5">
    <location>
        <begin position="32"/>
        <end position="38"/>
    </location>
</feature>
<feature type="strand" evidence="5">
    <location>
        <begin position="41"/>
        <end position="44"/>
    </location>
</feature>
<feature type="helix" evidence="5">
    <location>
        <begin position="50"/>
        <end position="66"/>
    </location>
</feature>
<feature type="strand" evidence="4">
    <location>
        <begin position="68"/>
        <end position="70"/>
    </location>
</feature>
<feature type="strand" evidence="5">
    <location>
        <begin position="72"/>
        <end position="78"/>
    </location>
</feature>
<feature type="helix" evidence="5">
    <location>
        <begin position="83"/>
        <end position="95"/>
    </location>
</feature>
<feature type="strand" evidence="5">
    <location>
        <begin position="96"/>
        <end position="98"/>
    </location>
</feature>
<feature type="strand" evidence="5">
    <location>
        <begin position="100"/>
        <end position="109"/>
    </location>
</feature>
<feature type="helix" evidence="5">
    <location>
        <begin position="111"/>
        <end position="117"/>
    </location>
</feature>
<feature type="strand" evidence="5">
    <location>
        <begin position="124"/>
        <end position="126"/>
    </location>
</feature>
<feature type="strand" evidence="5">
    <location>
        <begin position="131"/>
        <end position="134"/>
    </location>
</feature>
<feature type="strand" evidence="5">
    <location>
        <begin position="143"/>
        <end position="146"/>
    </location>
</feature>
<feature type="helix" evidence="5">
    <location>
        <begin position="147"/>
        <end position="172"/>
    </location>
</feature>
<feature type="helix" evidence="5">
    <location>
        <begin position="176"/>
        <end position="182"/>
    </location>
</feature>
<feature type="turn" evidence="6">
    <location>
        <begin position="184"/>
        <end position="186"/>
    </location>
</feature>
<feature type="strand" evidence="5">
    <location>
        <begin position="187"/>
        <end position="190"/>
    </location>
</feature>
<feature type="helix" evidence="5">
    <location>
        <begin position="191"/>
        <end position="196"/>
    </location>
</feature>
<feature type="strand" evidence="5">
    <location>
        <begin position="201"/>
        <end position="203"/>
    </location>
</feature>
<organism>
    <name type="scientific">Mycobacterium tuberculosis (strain ATCC 25618 / H37Rv)</name>
    <dbReference type="NCBI Taxonomy" id="83332"/>
    <lineage>
        <taxon>Bacteria</taxon>
        <taxon>Bacillati</taxon>
        <taxon>Actinomycetota</taxon>
        <taxon>Actinomycetes</taxon>
        <taxon>Mycobacteriales</taxon>
        <taxon>Mycobacteriaceae</taxon>
        <taxon>Mycobacterium</taxon>
        <taxon>Mycobacterium tuberculosis complex</taxon>
    </lineage>
</organism>
<reference key="1">
    <citation type="journal article" date="1998" name="Nature">
        <title>Deciphering the biology of Mycobacterium tuberculosis from the complete genome sequence.</title>
        <authorList>
            <person name="Cole S.T."/>
            <person name="Brosch R."/>
            <person name="Parkhill J."/>
            <person name="Garnier T."/>
            <person name="Churcher C.M."/>
            <person name="Harris D.E."/>
            <person name="Gordon S.V."/>
            <person name="Eiglmeier K."/>
            <person name="Gas S."/>
            <person name="Barry C.E. III"/>
            <person name="Tekaia F."/>
            <person name="Badcock K."/>
            <person name="Basham D."/>
            <person name="Brown D."/>
            <person name="Chillingworth T."/>
            <person name="Connor R."/>
            <person name="Davies R.M."/>
            <person name="Devlin K."/>
            <person name="Feltwell T."/>
            <person name="Gentles S."/>
            <person name="Hamlin N."/>
            <person name="Holroyd S."/>
            <person name="Hornsby T."/>
            <person name="Jagels K."/>
            <person name="Krogh A."/>
            <person name="McLean J."/>
            <person name="Moule S."/>
            <person name="Murphy L.D."/>
            <person name="Oliver S."/>
            <person name="Osborne J."/>
            <person name="Quail M.A."/>
            <person name="Rajandream M.A."/>
            <person name="Rogers J."/>
            <person name="Rutter S."/>
            <person name="Seeger K."/>
            <person name="Skelton S."/>
            <person name="Squares S."/>
            <person name="Squares R."/>
            <person name="Sulston J.E."/>
            <person name="Taylor K."/>
            <person name="Whitehead S."/>
            <person name="Barrell B.G."/>
        </authorList>
    </citation>
    <scope>NUCLEOTIDE SEQUENCE [LARGE SCALE GENOMIC DNA]</scope>
    <source>
        <strain>ATCC 25618 / H37Rv</strain>
    </source>
</reference>
<reference key="2">
    <citation type="journal article" date="2010" name="Mol. Microbiol.">
        <title>RseA, the SigE specific anti-sigma factor of Mycobacterium tuberculosis, is inactivated by phosphorylation-dependent ClpC1P2 proteolysis.</title>
        <authorList>
            <person name="Barik S."/>
            <person name="Sureka K."/>
            <person name="Mukherjee P."/>
            <person name="Basu J."/>
            <person name="Kundu M."/>
        </authorList>
    </citation>
    <scope>FUNCTION AS A PROTEASE</scope>
    <scope>INTERACTION WITH RSEA</scope>
    <source>
        <strain>ATCC 25618 / H37Rv</strain>
    </source>
</reference>
<reference key="3">
    <citation type="journal article" date="2011" name="Mol. Cell. Proteomics">
        <title>Proteogenomic analysis of Mycobacterium tuberculosis by high resolution mass spectrometry.</title>
        <authorList>
            <person name="Kelkar D.S."/>
            <person name="Kumar D."/>
            <person name="Kumar P."/>
            <person name="Balakrishnan L."/>
            <person name="Muthusamy B."/>
            <person name="Yadav A.K."/>
            <person name="Shrivastava P."/>
            <person name="Marimuthu A."/>
            <person name="Anand S."/>
            <person name="Sundaram H."/>
            <person name="Kingsbury R."/>
            <person name="Harsha H.C."/>
            <person name="Nair B."/>
            <person name="Prasad T.S."/>
            <person name="Chauhan D.S."/>
            <person name="Katoch K."/>
            <person name="Katoch V.M."/>
            <person name="Kumar P."/>
            <person name="Chaerkady R."/>
            <person name="Ramachandran S."/>
            <person name="Dash D."/>
            <person name="Pandey A."/>
        </authorList>
    </citation>
    <scope>IDENTIFICATION BY MASS SPECTROMETRY [LARGE SCALE ANALYSIS]</scope>
    <source>
        <strain>ATCC 25618 / H37Rv</strain>
    </source>
</reference>
<reference key="4">
    <citation type="journal article" date="2013" name="Nucleic Acids Res.">
        <title>Mycobacterium tuberculosis RsdA provides a conformational rationale for selective regulation of sigma-factor activity by proteolysis.</title>
        <authorList>
            <person name="Jaiswal R.K."/>
            <person name="Prabha T.S."/>
            <person name="Manjeera G."/>
            <person name="Gopal B."/>
        </authorList>
    </citation>
    <scope>FUNCTION AS A PROTEASE</scope>
    <scope>INTERACTION WITH CLPP1 AND CLPX</scope>
    <source>
        <strain>ATCC 25618 / H37Rv</strain>
    </source>
</reference>
<proteinExistence type="evidence at protein level"/>
<sequence length="214" mass="23540">MNSQNSQIQPQARYILPSFIEHSSFGVKESNPYNKLFEERIIFLGVQVDDASANDIMAQLLVLESLDPDRDITMYINSPGGGFTSLMAIYDTMQYVRADIQTVCLGQAASAAAVLLAAGTPGKRMALPNARVLIHQPSLSGVIQGQFSDLEIQAAEIERMRTLMETTLARHTGKDAGVIRKDTDRDKILTAEEAKDYGIIDTVLEYRKLSAQTA</sequence>